<sequence length="49" mass="5902">MRVKVTLACTECKRRNYNTMKNKKNDPDRLEMNKYCPHCHKHAAHKETK</sequence>
<keyword id="KW-0687">Ribonucleoprotein</keyword>
<keyword id="KW-0689">Ribosomal protein</keyword>
<gene>
    <name evidence="1" type="primary">rpmG</name>
    <name type="ordered locus">CLD_1009</name>
</gene>
<protein>
    <recommendedName>
        <fullName evidence="1">Large ribosomal subunit protein bL33</fullName>
    </recommendedName>
    <alternativeName>
        <fullName evidence="2">50S ribosomal protein L33</fullName>
    </alternativeName>
</protein>
<feature type="chain" id="PRO_0000356436" description="Large ribosomal subunit protein bL33">
    <location>
        <begin position="1"/>
        <end position="49"/>
    </location>
</feature>
<evidence type="ECO:0000255" key="1">
    <source>
        <dbReference type="HAMAP-Rule" id="MF_00294"/>
    </source>
</evidence>
<evidence type="ECO:0000305" key="2"/>
<reference key="1">
    <citation type="journal article" date="2007" name="PLoS ONE">
        <title>Analysis of the neurotoxin complex genes in Clostridium botulinum A1-A4 and B1 strains: BoNT/A3, /Ba4 and /B1 clusters are located within plasmids.</title>
        <authorList>
            <person name="Smith T.J."/>
            <person name="Hill K.K."/>
            <person name="Foley B.T."/>
            <person name="Detter J.C."/>
            <person name="Munk A.C."/>
            <person name="Bruce D.C."/>
            <person name="Doggett N.A."/>
            <person name="Smith L.A."/>
            <person name="Marks J.D."/>
            <person name="Xie G."/>
            <person name="Brettin T.S."/>
        </authorList>
    </citation>
    <scope>NUCLEOTIDE SEQUENCE [LARGE SCALE GENOMIC DNA]</scope>
    <source>
        <strain>Okra / Type B1</strain>
    </source>
</reference>
<organism>
    <name type="scientific">Clostridium botulinum (strain Okra / Type B1)</name>
    <dbReference type="NCBI Taxonomy" id="498213"/>
    <lineage>
        <taxon>Bacteria</taxon>
        <taxon>Bacillati</taxon>
        <taxon>Bacillota</taxon>
        <taxon>Clostridia</taxon>
        <taxon>Eubacteriales</taxon>
        <taxon>Clostridiaceae</taxon>
        <taxon>Clostridium</taxon>
    </lineage>
</organism>
<comment type="similarity">
    <text evidence="1">Belongs to the bacterial ribosomal protein bL33 family.</text>
</comment>
<accession>B1IGG9</accession>
<proteinExistence type="inferred from homology"/>
<dbReference type="EMBL" id="CP000939">
    <property type="protein sequence ID" value="ACA43866.1"/>
    <property type="molecule type" value="Genomic_DNA"/>
</dbReference>
<dbReference type="RefSeq" id="WP_003357626.1">
    <property type="nucleotide sequence ID" value="NC_010516.1"/>
</dbReference>
<dbReference type="SMR" id="B1IGG9"/>
<dbReference type="GeneID" id="5187732"/>
<dbReference type="KEGG" id="cbb:CLD_1009"/>
<dbReference type="HOGENOM" id="CLU_190949_0_2_9"/>
<dbReference type="Proteomes" id="UP000008541">
    <property type="component" value="Chromosome"/>
</dbReference>
<dbReference type="GO" id="GO:0005737">
    <property type="term" value="C:cytoplasm"/>
    <property type="evidence" value="ECO:0007669"/>
    <property type="project" value="UniProtKB-ARBA"/>
</dbReference>
<dbReference type="GO" id="GO:1990904">
    <property type="term" value="C:ribonucleoprotein complex"/>
    <property type="evidence" value="ECO:0007669"/>
    <property type="project" value="UniProtKB-KW"/>
</dbReference>
<dbReference type="GO" id="GO:0005840">
    <property type="term" value="C:ribosome"/>
    <property type="evidence" value="ECO:0007669"/>
    <property type="project" value="UniProtKB-KW"/>
</dbReference>
<dbReference type="GO" id="GO:0003735">
    <property type="term" value="F:structural constituent of ribosome"/>
    <property type="evidence" value="ECO:0007669"/>
    <property type="project" value="InterPro"/>
</dbReference>
<dbReference type="GO" id="GO:0006412">
    <property type="term" value="P:translation"/>
    <property type="evidence" value="ECO:0007669"/>
    <property type="project" value="UniProtKB-UniRule"/>
</dbReference>
<dbReference type="Gene3D" id="2.20.28.120">
    <property type="entry name" value="Ribosomal protein L33"/>
    <property type="match status" value="1"/>
</dbReference>
<dbReference type="HAMAP" id="MF_00294">
    <property type="entry name" value="Ribosomal_bL33"/>
    <property type="match status" value="1"/>
</dbReference>
<dbReference type="InterPro" id="IPR001705">
    <property type="entry name" value="Ribosomal_bL33"/>
</dbReference>
<dbReference type="InterPro" id="IPR018264">
    <property type="entry name" value="Ribosomal_bL33_CS"/>
</dbReference>
<dbReference type="InterPro" id="IPR038584">
    <property type="entry name" value="Ribosomal_bL33_sf"/>
</dbReference>
<dbReference type="InterPro" id="IPR011332">
    <property type="entry name" value="Ribosomal_zn-bd"/>
</dbReference>
<dbReference type="NCBIfam" id="NF001764">
    <property type="entry name" value="PRK00504.1"/>
    <property type="match status" value="1"/>
</dbReference>
<dbReference type="NCBIfam" id="NF001860">
    <property type="entry name" value="PRK00595.1"/>
    <property type="match status" value="1"/>
</dbReference>
<dbReference type="NCBIfam" id="TIGR01023">
    <property type="entry name" value="rpmG_bact"/>
    <property type="match status" value="1"/>
</dbReference>
<dbReference type="PANTHER" id="PTHR43168">
    <property type="entry name" value="50S RIBOSOMAL PROTEIN L33, CHLOROPLASTIC"/>
    <property type="match status" value="1"/>
</dbReference>
<dbReference type="PANTHER" id="PTHR43168:SF2">
    <property type="entry name" value="LARGE RIBOSOMAL SUBUNIT PROTEIN BL33C"/>
    <property type="match status" value="1"/>
</dbReference>
<dbReference type="Pfam" id="PF00471">
    <property type="entry name" value="Ribosomal_L33"/>
    <property type="match status" value="1"/>
</dbReference>
<dbReference type="SUPFAM" id="SSF57829">
    <property type="entry name" value="Zn-binding ribosomal proteins"/>
    <property type="match status" value="1"/>
</dbReference>
<dbReference type="PROSITE" id="PS00582">
    <property type="entry name" value="RIBOSOMAL_L33"/>
    <property type="match status" value="1"/>
</dbReference>
<name>RL33_CLOBK</name>